<keyword id="KW-0007">Acetylation</keyword>
<keyword id="KW-0050">Antiport</keyword>
<keyword id="KW-0903">Direct protein sequencing</keyword>
<keyword id="KW-0472">Membrane</keyword>
<keyword id="KW-0488">Methylation</keyword>
<keyword id="KW-0496">Mitochondrion</keyword>
<keyword id="KW-0999">Mitochondrion inner membrane</keyword>
<keyword id="KW-0597">Phosphoprotein</keyword>
<keyword id="KW-1185">Reference proteome</keyword>
<keyword id="KW-0677">Repeat</keyword>
<keyword id="KW-0702">S-nitrosylation</keyword>
<keyword id="KW-0812">Transmembrane</keyword>
<keyword id="KW-1133">Transmembrane helix</keyword>
<keyword id="KW-0813">Transport</keyword>
<evidence type="ECO:0000250" key="1">
    <source>
        <dbReference type="UniProtKB" id="G2QNH0"/>
    </source>
</evidence>
<evidence type="ECO:0000250" key="2">
    <source>
        <dbReference type="UniProtKB" id="P02722"/>
    </source>
</evidence>
<evidence type="ECO:0000250" key="3">
    <source>
        <dbReference type="UniProtKB" id="P12235"/>
    </source>
</evidence>
<evidence type="ECO:0000250" key="4">
    <source>
        <dbReference type="UniProtKB" id="P48962"/>
    </source>
</evidence>
<evidence type="ECO:0000255" key="5"/>
<evidence type="ECO:0000269" key="6">
    <source>
    </source>
</evidence>
<evidence type="ECO:0000269" key="7">
    <source ref="2"/>
</evidence>
<evidence type="ECO:0000303" key="8">
    <source>
    </source>
</evidence>
<evidence type="ECO:0000305" key="9"/>
<evidence type="ECO:0000312" key="10">
    <source>
        <dbReference type="RGD" id="620352"/>
    </source>
</evidence>
<evidence type="ECO:0007744" key="11">
    <source>
    </source>
</evidence>
<evidence type="ECO:0007744" key="12">
    <source>
    </source>
</evidence>
<dbReference type="EMBL" id="X61667">
    <property type="protein sequence ID" value="CAA43842.1"/>
    <property type="molecule type" value="Genomic_DNA"/>
</dbReference>
<dbReference type="EMBL" id="D12770">
    <property type="protein sequence ID" value="BAA02237.1"/>
    <property type="molecule type" value="mRNA"/>
</dbReference>
<dbReference type="PIR" id="I60173">
    <property type="entry name" value="I60173"/>
</dbReference>
<dbReference type="RefSeq" id="NP_445967.1">
    <property type="nucleotide sequence ID" value="NM_053515.1"/>
</dbReference>
<dbReference type="SMR" id="Q05962"/>
<dbReference type="BioGRID" id="250085">
    <property type="interactions" value="8"/>
</dbReference>
<dbReference type="CORUM" id="Q05962"/>
<dbReference type="FunCoup" id="Q05962">
    <property type="interactions" value="2134"/>
</dbReference>
<dbReference type="IntAct" id="Q05962">
    <property type="interactions" value="8"/>
</dbReference>
<dbReference type="MINT" id="Q05962"/>
<dbReference type="STRING" id="10116.ENSRNOP00000014704"/>
<dbReference type="CarbonylDB" id="Q05962"/>
<dbReference type="GlyGen" id="Q05962">
    <property type="glycosylation" value="5 sites, 1 O-linked glycan (5 sites)"/>
</dbReference>
<dbReference type="iPTMnet" id="Q05962"/>
<dbReference type="PhosphoSitePlus" id="Q05962"/>
<dbReference type="jPOST" id="Q05962"/>
<dbReference type="PaxDb" id="10116-ENSRNOP00000014704"/>
<dbReference type="GeneID" id="85333"/>
<dbReference type="KEGG" id="rno:85333"/>
<dbReference type="AGR" id="RGD:620352"/>
<dbReference type="CTD" id="291"/>
<dbReference type="RGD" id="620352">
    <property type="gene designation" value="Slc25a4"/>
</dbReference>
<dbReference type="eggNOG" id="KOG0749">
    <property type="taxonomic scope" value="Eukaryota"/>
</dbReference>
<dbReference type="InParanoid" id="Q05962"/>
<dbReference type="OrthoDB" id="270584at2759"/>
<dbReference type="PhylomeDB" id="Q05962"/>
<dbReference type="Reactome" id="R-RNO-166187">
    <property type="pathway name" value="Mitochondrial Uncoupling"/>
</dbReference>
<dbReference type="Reactome" id="R-RNO-83936">
    <property type="pathway name" value="Transport of nucleosides and free purine and pyrimidine bases across the plasma membrane"/>
</dbReference>
<dbReference type="PRO" id="PR:Q05962"/>
<dbReference type="Proteomes" id="UP000002494">
    <property type="component" value="Unplaced"/>
</dbReference>
<dbReference type="GO" id="GO:0016020">
    <property type="term" value="C:membrane"/>
    <property type="evidence" value="ECO:0000266"/>
    <property type="project" value="RGD"/>
</dbReference>
<dbReference type="GO" id="GO:0045121">
    <property type="term" value="C:membrane raft"/>
    <property type="evidence" value="ECO:0000314"/>
    <property type="project" value="CAFA"/>
</dbReference>
<dbReference type="GO" id="GO:0005743">
    <property type="term" value="C:mitochondrial inner membrane"/>
    <property type="evidence" value="ECO:0000314"/>
    <property type="project" value="MGI"/>
</dbReference>
<dbReference type="GO" id="GO:0031966">
    <property type="term" value="C:mitochondrial membrane"/>
    <property type="evidence" value="ECO:0000250"/>
    <property type="project" value="UniProtKB"/>
</dbReference>
<dbReference type="GO" id="GO:0005741">
    <property type="term" value="C:mitochondrial outer membrane"/>
    <property type="evidence" value="ECO:0000314"/>
    <property type="project" value="MGI"/>
</dbReference>
<dbReference type="GO" id="GO:0005757">
    <property type="term" value="C:mitochondrial permeability transition pore complex"/>
    <property type="evidence" value="ECO:0000250"/>
    <property type="project" value="UniProtKB"/>
</dbReference>
<dbReference type="GO" id="GO:0005471">
    <property type="term" value="F:ATP:ADP antiporter activity"/>
    <property type="evidence" value="ECO:0000250"/>
    <property type="project" value="UniProtKB"/>
</dbReference>
<dbReference type="GO" id="GO:0019899">
    <property type="term" value="F:enzyme binding"/>
    <property type="evidence" value="ECO:0000353"/>
    <property type="project" value="RGD"/>
</dbReference>
<dbReference type="GO" id="GO:0017077">
    <property type="term" value="F:oxidative phosphorylation uncoupler activity"/>
    <property type="evidence" value="ECO:0000250"/>
    <property type="project" value="UniProtKB"/>
</dbReference>
<dbReference type="GO" id="GO:0015078">
    <property type="term" value="F:proton transmembrane transporter activity"/>
    <property type="evidence" value="ECO:0000266"/>
    <property type="project" value="RGD"/>
</dbReference>
<dbReference type="GO" id="GO:1990845">
    <property type="term" value="P:adaptive thermogenesis"/>
    <property type="evidence" value="ECO:0000250"/>
    <property type="project" value="UniProtKB"/>
</dbReference>
<dbReference type="GO" id="GO:0015866">
    <property type="term" value="P:ADP transport"/>
    <property type="evidence" value="ECO:0000250"/>
    <property type="project" value="UniProtKB"/>
</dbReference>
<dbReference type="GO" id="GO:0008637">
    <property type="term" value="P:apoptotic mitochondrial changes"/>
    <property type="evidence" value="ECO:0000266"/>
    <property type="project" value="RGD"/>
</dbReference>
<dbReference type="GO" id="GO:0007507">
    <property type="term" value="P:heart development"/>
    <property type="evidence" value="ECO:0000270"/>
    <property type="project" value="RGD"/>
</dbReference>
<dbReference type="GO" id="GO:0001889">
    <property type="term" value="P:liver development"/>
    <property type="evidence" value="ECO:0000270"/>
    <property type="project" value="RGD"/>
</dbReference>
<dbReference type="GO" id="GO:0140021">
    <property type="term" value="P:mitochondrial ADP transmembrane transport"/>
    <property type="evidence" value="ECO:0000250"/>
    <property type="project" value="UniProtKB"/>
</dbReference>
<dbReference type="GO" id="GO:1990544">
    <property type="term" value="P:mitochondrial ATP transmembrane transport"/>
    <property type="evidence" value="ECO:0000250"/>
    <property type="project" value="UniProtKB"/>
</dbReference>
<dbReference type="GO" id="GO:0010667">
    <property type="term" value="P:negative regulation of cardiac muscle cell apoptotic process"/>
    <property type="evidence" value="ECO:0000314"/>
    <property type="project" value="RGD"/>
</dbReference>
<dbReference type="GO" id="GO:1902109">
    <property type="term" value="P:negative regulation of mitochondrial membrane permeability involved in apoptotic process"/>
    <property type="evidence" value="ECO:0000314"/>
    <property type="project" value="RGD"/>
</dbReference>
<dbReference type="GO" id="GO:1901029">
    <property type="term" value="P:negative regulation of mitochondrial outer membrane permeabilization involved in apoptotic signaling pathway"/>
    <property type="evidence" value="ECO:0000318"/>
    <property type="project" value="GO_Central"/>
</dbReference>
<dbReference type="GO" id="GO:0060546">
    <property type="term" value="P:negative regulation of necroptotic process"/>
    <property type="evidence" value="ECO:0000266"/>
    <property type="project" value="RGD"/>
</dbReference>
<dbReference type="GO" id="GO:0061051">
    <property type="term" value="P:positive regulation of cell growth involved in cardiac muscle cell development"/>
    <property type="evidence" value="ECO:0000314"/>
    <property type="project" value="RGD"/>
</dbReference>
<dbReference type="GO" id="GO:1901526">
    <property type="term" value="P:positive regulation of mitophagy"/>
    <property type="evidence" value="ECO:0000250"/>
    <property type="project" value="UniProtKB"/>
</dbReference>
<dbReference type="GO" id="GO:0046902">
    <property type="term" value="P:regulation of mitochondrial membrane permeability"/>
    <property type="evidence" value="ECO:0000266"/>
    <property type="project" value="RGD"/>
</dbReference>
<dbReference type="GO" id="GO:0070555">
    <property type="term" value="P:response to interleukin-1"/>
    <property type="evidence" value="ECO:0000270"/>
    <property type="project" value="RGD"/>
</dbReference>
<dbReference type="FunFam" id="1.50.40.10:FF:000002">
    <property type="entry name" value="Putative ADP/ATP translocase 2-like"/>
    <property type="match status" value="1"/>
</dbReference>
<dbReference type="Gene3D" id="1.50.40.10">
    <property type="entry name" value="Mitochondrial carrier domain"/>
    <property type="match status" value="1"/>
</dbReference>
<dbReference type="InterPro" id="IPR002113">
    <property type="entry name" value="ADT_euk_type"/>
</dbReference>
<dbReference type="InterPro" id="IPR002067">
    <property type="entry name" value="Mit_carrier"/>
</dbReference>
<dbReference type="InterPro" id="IPR018108">
    <property type="entry name" value="Mitochondrial_sb/sol_carrier"/>
</dbReference>
<dbReference type="InterPro" id="IPR023395">
    <property type="entry name" value="Mt_carrier_dom_sf"/>
</dbReference>
<dbReference type="PANTHER" id="PTHR45635">
    <property type="entry name" value="ADP,ATP CARRIER PROTEIN 1-RELATED-RELATED"/>
    <property type="match status" value="1"/>
</dbReference>
<dbReference type="PANTHER" id="PTHR45635:SF32">
    <property type="entry name" value="ADP_ATP TRANSLOCASE 1"/>
    <property type="match status" value="1"/>
</dbReference>
<dbReference type="Pfam" id="PF00153">
    <property type="entry name" value="Mito_carr"/>
    <property type="match status" value="3"/>
</dbReference>
<dbReference type="PRINTS" id="PR00927">
    <property type="entry name" value="ADPTRNSLCASE"/>
</dbReference>
<dbReference type="PRINTS" id="PR00926">
    <property type="entry name" value="MITOCARRIER"/>
</dbReference>
<dbReference type="SUPFAM" id="SSF103506">
    <property type="entry name" value="Mitochondrial carrier"/>
    <property type="match status" value="1"/>
</dbReference>
<dbReference type="PROSITE" id="PS50920">
    <property type="entry name" value="SOLCAR"/>
    <property type="match status" value="3"/>
</dbReference>
<comment type="function">
    <text evidence="1 3 4">ADP:ATP antiporter that mediates import of ADP into the mitochondrial matrix for ATP synthesis, and export of ATP out to fuel the cell (By similarity). Cycles between the cytoplasmic-open state (c-state) and the matrix-open state (m-state): operates by the alternating access mechanism with a single substrate-binding site intermittently exposed to either the cytosolic (c-state) or matrix (m-state) side of the inner mitochondrial membrane (By similarity). In addition to its ADP:ATP antiporter activity, also involved in mitochondrial uncoupling and mitochondrial permeability transition pore (mPTP) activity (By similarity). Plays a role in mitochondrial uncoupling by acting as a proton transporter: proton transport uncouples the proton flows via the electron transport chain and ATP synthase to reduce the efficiency of ATP production and cause mitochondrial thermogenesis. Proton transporter activity is inhibited by ADP:ATP antiporter activity, suggesting that SLC25A4/ANT1 acts as a master regulator of mitochondrial energy output by maintaining a delicate balance between ATP production (ADP:ATP antiporter activity) and thermogenesis (proton transporter activity). Proton transporter activity requires free fatty acids as cofactor, but does not transport it (By similarity). Also plays a key role in mPTP opening, a non-specific pore that enables free passage of the mitochondrial membranes to solutes of up to 1.5 kDa, and which contributes to cell death (By similarity). It is however unclear if SLC25A4/ANT1 constitutes a pore-forming component of mPTP or regulates it (By similarity). Acts as a regulator of mitophagy independently of ADP:ATP antiporter activity: promotes mitophagy via interaction with TIMM44, leading to inhibit the presequence translocase TIMM23, thereby promoting stabilization of PINK1 (By similarity).</text>
</comment>
<comment type="catalytic activity">
    <reaction evidence="3">
        <text>ADP(in) + ATP(out) = ADP(out) + ATP(in)</text>
        <dbReference type="Rhea" id="RHEA:34999"/>
        <dbReference type="ChEBI" id="CHEBI:30616"/>
        <dbReference type="ChEBI" id="CHEBI:456216"/>
    </reaction>
</comment>
<comment type="catalytic activity">
    <reaction evidence="4">
        <text>H(+)(in) = H(+)(out)</text>
        <dbReference type="Rhea" id="RHEA:34979"/>
        <dbReference type="ChEBI" id="CHEBI:15378"/>
    </reaction>
</comment>
<comment type="activity regulation">
    <text evidence="1 3 4">The matrix-open state (m-state) is inhibited by the membrane-permeable bongkrekic acid (BKA) (By similarity). The cytoplasmic-open state (c-state) is inhibited by the membrane-impermeable toxic inhibitor carboxyatractyloside (CATR) (By similarity). Proton transporter activity is inhibited by ADP:ATP antiporter activity (By similarity).</text>
</comment>
<comment type="subunit">
    <text evidence="1 2 4">Monomer (By similarity). Found in a complex with ARL2, ARL2BP and SLC25A4/ANT1. Interacts with ARL2BP. Interacts with TIMM44; leading to inhibit the presequence translocase TIMM23, thereby promoting stabilization of PINK1 (By similarity).</text>
</comment>
<comment type="subcellular location">
    <subcellularLocation>
        <location evidence="3">Mitochondrion inner membrane</location>
        <topology evidence="5">Multi-pass membrane protein</topology>
    </subcellularLocation>
    <subcellularLocation>
        <location evidence="3">Membrane</location>
        <topology evidence="5">Multi-pass membrane protein</topology>
    </subcellularLocation>
    <text evidence="3 4">The complex formed with ARL2BP, ARL2 and SLC25A4/ANT1 is expressed in mitochondria (By similarity). May localize to non-mitochondrial membranes (By similarity).</text>
</comment>
<comment type="domain">
    <text evidence="2">The transmembrane helices are not perpendicular to the plane of the membrane, but cross the membrane at an angle. Odd-numbered transmembrane helices exhibit a sharp kink, due to the presence of a conserved proline residue.</text>
</comment>
<comment type="PTM">
    <text evidence="4">Under cell death induction, transglutaminated by TGM2. Transglutamination leads to formation of covalent cross-links between a glutamine and the epsilon-amino group of a lysine residue, forming polymers.</text>
</comment>
<comment type="similarity">
    <text evidence="9">Belongs to the mitochondrial carrier (TC 2.A.29) family.</text>
</comment>
<feature type="initiator methionine" description="Removed" evidence="7">
    <location>
        <position position="1"/>
    </location>
</feature>
<feature type="chain" id="PRO_0000090577" description="ADP/ATP translocase 1">
    <location>
        <begin position="2"/>
        <end position="298"/>
    </location>
</feature>
<feature type="topological domain" description="Mitochondrial intermembrane" evidence="9">
    <location>
        <begin position="1"/>
        <end position="7"/>
    </location>
</feature>
<feature type="transmembrane region" description="Helical; Name=1" evidence="2">
    <location>
        <begin position="8"/>
        <end position="37"/>
    </location>
</feature>
<feature type="topological domain" description="Mitochondrial matrix" evidence="9">
    <location>
        <begin position="38"/>
        <end position="74"/>
    </location>
</feature>
<feature type="transmembrane region" description="Helical; Name=2" evidence="2">
    <location>
        <begin position="75"/>
        <end position="99"/>
    </location>
</feature>
<feature type="topological domain" description="Mitochondrial intermembrane" evidence="9">
    <location>
        <begin position="100"/>
        <end position="109"/>
    </location>
</feature>
<feature type="transmembrane region" description="Helical; Name=3" evidence="2">
    <location>
        <begin position="110"/>
        <end position="130"/>
    </location>
</feature>
<feature type="topological domain" description="Mitochondrial matrix" evidence="9">
    <location>
        <begin position="131"/>
        <end position="178"/>
    </location>
</feature>
<feature type="transmembrane region" description="Helical; Name=4" evidence="2">
    <location>
        <begin position="179"/>
        <end position="199"/>
    </location>
</feature>
<feature type="topological domain" description="Mitochondrial intermembrane" evidence="9">
    <location>
        <begin position="200"/>
        <end position="210"/>
    </location>
</feature>
<feature type="transmembrane region" description="Helical; Name=5" evidence="2">
    <location>
        <begin position="211"/>
        <end position="231"/>
    </location>
</feature>
<feature type="topological domain" description="Mitochondrial matrix" evidence="9">
    <location>
        <begin position="232"/>
        <end position="273"/>
    </location>
</feature>
<feature type="transmembrane region" description="Helical; Name=6" evidence="2">
    <location>
        <begin position="274"/>
        <end position="291"/>
    </location>
</feature>
<feature type="topological domain" description="Mitochondrial intermembrane" evidence="9">
    <location>
        <begin position="292"/>
        <end position="298"/>
    </location>
</feature>
<feature type="repeat" description="Solcar 1">
    <location>
        <begin position="6"/>
        <end position="98"/>
    </location>
</feature>
<feature type="repeat" description="Solcar 2">
    <location>
        <begin position="111"/>
        <end position="201"/>
    </location>
</feature>
<feature type="repeat" description="Solcar 3">
    <location>
        <begin position="212"/>
        <end position="297"/>
    </location>
</feature>
<feature type="region of interest" description="Important for transport activity" evidence="3">
    <location>
        <begin position="235"/>
        <end position="240"/>
    </location>
</feature>
<feature type="short sequence motif" description="Nucleotide carrier signature motif" evidence="2">
    <location>
        <begin position="235"/>
        <end position="240"/>
    </location>
</feature>
<feature type="binding site" evidence="2">
    <location>
        <position position="80"/>
    </location>
    <ligand>
        <name>ADP</name>
        <dbReference type="ChEBI" id="CHEBI:456216"/>
    </ligand>
</feature>
<feature type="binding site" evidence="2">
    <location>
        <position position="92"/>
    </location>
    <ligand>
        <name>ADP</name>
        <dbReference type="ChEBI" id="CHEBI:456216"/>
    </ligand>
</feature>
<feature type="binding site" evidence="2">
    <location>
        <position position="235"/>
    </location>
    <ligand>
        <name>ADP</name>
        <dbReference type="ChEBI" id="CHEBI:456216"/>
    </ligand>
</feature>
<feature type="modified residue" description="N-acetylglycine" evidence="7">
    <location>
        <position position="2"/>
    </location>
</feature>
<feature type="modified residue" description="Phosphoserine" evidence="12">
    <location>
        <position position="7"/>
    </location>
</feature>
<feature type="modified residue" description="N6,N6,N6-trimethyllysine" evidence="6">
    <location>
        <position position="52"/>
    </location>
</feature>
<feature type="modified residue" description="N6-succinyllysine" evidence="4">
    <location>
        <position position="147"/>
    </location>
</feature>
<feature type="modified residue" description="Phosphoserine" evidence="12">
    <location>
        <position position="149"/>
    </location>
</feature>
<feature type="modified residue" description="Phosphoserine" evidence="12">
    <location>
        <position position="150"/>
    </location>
</feature>
<feature type="modified residue" description="S-nitrosocysteine" evidence="11">
    <location>
        <position position="160"/>
    </location>
</feature>
<feature type="modified residue" description="N6-succinyllysine" evidence="4">
    <location>
        <position position="245"/>
    </location>
</feature>
<feature type="modified residue" description="N6-succinyllysine" evidence="4">
    <location>
        <position position="272"/>
    </location>
</feature>
<gene>
    <name evidence="10" type="primary">Slc25a4</name>
    <name evidence="4" type="synonym">Aac1</name>
    <name evidence="8" type="synonym">Ant1</name>
</gene>
<name>ADT1_RAT</name>
<proteinExistence type="evidence at protein level"/>
<accession>Q05962</accession>
<sequence length="298" mass="32989">MGDQALSFLKDFLAGGIAAAVSKTAVAPIERVKLLLQVQHASKQISAEKQYKGIIDCVVRIPKEQGFLSFWRGNLANVIRYFPTQALNFAFKDKYKQIFLGGVDRHKQFWRYFAGNLASGGAAGATSLCFVYPLDFARTRLAADVGKGSSQREFNGLGDCLTKIFKSDGLKGLYQGFSVSVQGIIIYRAAYFGVYDTAKGMLPDPKNVHIIVSWMIAQSVTAVAGLVSYPFDTVRRRMMMQSGRKGADIMYTGTVDCWRKIAKDEGRKAFFKGAWSNVLRGMGGAFVLVLYDEIKKYV</sequence>
<organism>
    <name type="scientific">Rattus norvegicus</name>
    <name type="common">Rat</name>
    <dbReference type="NCBI Taxonomy" id="10116"/>
    <lineage>
        <taxon>Eukaryota</taxon>
        <taxon>Metazoa</taxon>
        <taxon>Chordata</taxon>
        <taxon>Craniata</taxon>
        <taxon>Vertebrata</taxon>
        <taxon>Euteleostomi</taxon>
        <taxon>Mammalia</taxon>
        <taxon>Eutheria</taxon>
        <taxon>Euarchontoglires</taxon>
        <taxon>Glires</taxon>
        <taxon>Rodentia</taxon>
        <taxon>Myomorpha</taxon>
        <taxon>Muroidea</taxon>
        <taxon>Muridae</taxon>
        <taxon>Murinae</taxon>
        <taxon>Rattus</taxon>
    </lineage>
</organism>
<reference key="1">
    <citation type="journal article" date="1993" name="Biochim. Biophys. Acta">
        <title>Isolation and characterization of cDNA clones and a genomic clone encoding rat mitochondrial adenine nucleotide translocator.</title>
        <authorList>
            <person name="Shinohara Y."/>
            <person name="Kamida M."/>
            <person name="Yamazaki N."/>
            <person name="Terada H."/>
        </authorList>
    </citation>
    <scope>NUCLEOTIDE SEQUENCE [GENOMIC DNA / MRNA]</scope>
    <source>
        <strain>Sprague-Dawley</strain>
        <strain>Wistar</strain>
        <tissue>Heart</tissue>
        <tissue>Liver</tissue>
    </source>
</reference>
<reference key="2">
    <citation type="submission" date="2006-08" db="UniProtKB">
        <authorList>
            <person name="Bienvenut W.V."/>
            <person name="von Kriegsheim A.F."/>
            <person name="Kolch W."/>
        </authorList>
    </citation>
    <scope>PROTEIN SEQUENCE OF 2-31; 34-43; 73-80 AND 273-280</scope>
    <scope>CLEAVAGE OF INITIATOR METHIONINE</scope>
    <scope>ACETYLATION AT GLY-2</scope>
    <scope>IDENTIFICATION BY MASS SPECTROMETRY</scope>
    <source>
        <tissue>Pheochromocytoma</tissue>
    </source>
</reference>
<reference key="3">
    <citation type="journal article" date="2006" name="Proc. Natl. Acad. Sci. U.S.A.">
        <title>SNOSID, a proteomic method for identification of cysteine S-nitrosylation sites in complex protein mixtures.</title>
        <authorList>
            <person name="Hao G."/>
            <person name="Derakhshan B."/>
            <person name="Shi L."/>
            <person name="Campagne F."/>
            <person name="Gross S.S."/>
        </authorList>
    </citation>
    <scope>S-NITROSYLATION [LARGE SCALE ANALYSIS] AT CYS-160</scope>
    <scope>IDENTIFICATION BY MASS SPECTROMETRY [LARGE SCALE ANALYSIS]</scope>
</reference>
<reference key="4">
    <citation type="journal article" date="2012" name="Nat. Commun.">
        <title>Quantitative maps of protein phosphorylation sites across 14 different rat organs and tissues.</title>
        <authorList>
            <person name="Lundby A."/>
            <person name="Secher A."/>
            <person name="Lage K."/>
            <person name="Nordsborg N.B."/>
            <person name="Dmytriyev A."/>
            <person name="Lundby C."/>
            <person name="Olsen J.V."/>
        </authorList>
    </citation>
    <scope>PHOSPHORYLATION [LARGE SCALE ANALYSIS] AT SER-7; SER-149 AND SER-150</scope>
    <scope>IDENTIFICATION BY MASS SPECTROMETRY [LARGE SCALE ANALYSIS]</scope>
</reference>
<reference key="5">
    <citation type="journal article" date="2019" name="J. Biol. Chem.">
        <title>Human FAM173A is a mitochondrial lysine-specific methyltransferase that targets adenine nucleotide translocase and affects mitochondrial respiration.</title>
        <authorList>
            <person name="Malecki J."/>
            <person name="Willemen H.L.D.M."/>
            <person name="Pinto R."/>
            <person name="Ho A.Y.Y."/>
            <person name="Moen A."/>
            <person name="Eijkelkamp N."/>
            <person name="Falnes P.O."/>
        </authorList>
    </citation>
    <scope>METHYLATION AT LYS-52</scope>
</reference>
<protein>
    <recommendedName>
        <fullName evidence="9">ADP/ATP translocase 1</fullName>
    </recommendedName>
    <alternativeName>
        <fullName evidence="4">ADP,ATP carrier protein 1</fullName>
    </alternativeName>
    <alternativeName>
        <fullName evidence="8">Adenine nucleotide translocator 1</fullName>
        <shortName evidence="8">ANT 1</shortName>
    </alternativeName>
    <alternativeName>
        <fullName evidence="9">Solute carrier family 25 member 4</fullName>
    </alternativeName>
</protein>